<feature type="chain" id="PRO_0000294758" description="Small ribosomal subunit protein uS11">
    <location>
        <begin position="1"/>
        <end position="129"/>
    </location>
</feature>
<accession>A0Q4K6</accession>
<reference key="1">
    <citation type="journal article" date="2007" name="Genome Biol.">
        <title>Comparison of Francisella tularensis genomes reveals evolutionary events associated with the emergence of human pathogenic strains.</title>
        <authorList>
            <person name="Rohmer L."/>
            <person name="Fong C."/>
            <person name="Abmayr S."/>
            <person name="Wasnick M."/>
            <person name="Larson Freeman T.J."/>
            <person name="Radey M."/>
            <person name="Guina T."/>
            <person name="Svensson K."/>
            <person name="Hayden H.S."/>
            <person name="Jacobs M."/>
            <person name="Gallagher L.A."/>
            <person name="Manoil C."/>
            <person name="Ernst R.K."/>
            <person name="Drees B."/>
            <person name="Buckley D."/>
            <person name="Haugen E."/>
            <person name="Bovee D."/>
            <person name="Zhou Y."/>
            <person name="Chang J."/>
            <person name="Levy R."/>
            <person name="Lim R."/>
            <person name="Gillett W."/>
            <person name="Guenthener D."/>
            <person name="Kang A."/>
            <person name="Shaffer S.A."/>
            <person name="Taylor G."/>
            <person name="Chen J."/>
            <person name="Gallis B."/>
            <person name="D'Argenio D.A."/>
            <person name="Forsman M."/>
            <person name="Olson M.V."/>
            <person name="Goodlett D.R."/>
            <person name="Kaul R."/>
            <person name="Miller S.I."/>
            <person name="Brittnacher M.J."/>
        </authorList>
    </citation>
    <scope>NUCLEOTIDE SEQUENCE [LARGE SCALE GENOMIC DNA]</scope>
    <source>
        <strain>U112</strain>
    </source>
</reference>
<comment type="function">
    <text evidence="1">Located on the platform of the 30S subunit, it bridges several disparate RNA helices of the 16S rRNA. Forms part of the Shine-Dalgarno cleft in the 70S ribosome.</text>
</comment>
<comment type="subunit">
    <text evidence="1">Part of the 30S ribosomal subunit. Interacts with proteins S7 and S18. Binds to IF-3.</text>
</comment>
<comment type="similarity">
    <text evidence="1">Belongs to the universal ribosomal protein uS11 family.</text>
</comment>
<evidence type="ECO:0000255" key="1">
    <source>
        <dbReference type="HAMAP-Rule" id="MF_01310"/>
    </source>
</evidence>
<evidence type="ECO:0000305" key="2"/>
<dbReference type="EMBL" id="CP000439">
    <property type="protein sequence ID" value="ABK89171.1"/>
    <property type="molecule type" value="Genomic_DNA"/>
</dbReference>
<dbReference type="RefSeq" id="WP_003021583.1">
    <property type="nucleotide sequence ID" value="NZ_CP009633.1"/>
</dbReference>
<dbReference type="SMR" id="A0Q4K6"/>
<dbReference type="GeneID" id="93254573"/>
<dbReference type="KEGG" id="ftn:FTN_0262"/>
<dbReference type="KEGG" id="ftx:AW25_1780"/>
<dbReference type="BioCyc" id="FTUL401614:G1G75-273-MONOMER"/>
<dbReference type="Proteomes" id="UP000000762">
    <property type="component" value="Chromosome"/>
</dbReference>
<dbReference type="GO" id="GO:1990904">
    <property type="term" value="C:ribonucleoprotein complex"/>
    <property type="evidence" value="ECO:0007669"/>
    <property type="project" value="UniProtKB-KW"/>
</dbReference>
<dbReference type="GO" id="GO:0005840">
    <property type="term" value="C:ribosome"/>
    <property type="evidence" value="ECO:0007669"/>
    <property type="project" value="UniProtKB-KW"/>
</dbReference>
<dbReference type="GO" id="GO:0019843">
    <property type="term" value="F:rRNA binding"/>
    <property type="evidence" value="ECO:0007669"/>
    <property type="project" value="UniProtKB-UniRule"/>
</dbReference>
<dbReference type="GO" id="GO:0003735">
    <property type="term" value="F:structural constituent of ribosome"/>
    <property type="evidence" value="ECO:0007669"/>
    <property type="project" value="InterPro"/>
</dbReference>
<dbReference type="GO" id="GO:0006412">
    <property type="term" value="P:translation"/>
    <property type="evidence" value="ECO:0007669"/>
    <property type="project" value="UniProtKB-UniRule"/>
</dbReference>
<dbReference type="FunFam" id="3.30.420.80:FF:000001">
    <property type="entry name" value="30S ribosomal protein S11"/>
    <property type="match status" value="1"/>
</dbReference>
<dbReference type="Gene3D" id="3.30.420.80">
    <property type="entry name" value="Ribosomal protein S11"/>
    <property type="match status" value="1"/>
</dbReference>
<dbReference type="HAMAP" id="MF_01310">
    <property type="entry name" value="Ribosomal_uS11"/>
    <property type="match status" value="1"/>
</dbReference>
<dbReference type="InterPro" id="IPR001971">
    <property type="entry name" value="Ribosomal_uS11"/>
</dbReference>
<dbReference type="InterPro" id="IPR019981">
    <property type="entry name" value="Ribosomal_uS11_bac-type"/>
</dbReference>
<dbReference type="InterPro" id="IPR018102">
    <property type="entry name" value="Ribosomal_uS11_CS"/>
</dbReference>
<dbReference type="InterPro" id="IPR036967">
    <property type="entry name" value="Ribosomal_uS11_sf"/>
</dbReference>
<dbReference type="NCBIfam" id="NF003698">
    <property type="entry name" value="PRK05309.1"/>
    <property type="match status" value="1"/>
</dbReference>
<dbReference type="NCBIfam" id="TIGR03632">
    <property type="entry name" value="uS11_bact"/>
    <property type="match status" value="1"/>
</dbReference>
<dbReference type="PANTHER" id="PTHR11759">
    <property type="entry name" value="40S RIBOSOMAL PROTEIN S14/30S RIBOSOMAL PROTEIN S11"/>
    <property type="match status" value="1"/>
</dbReference>
<dbReference type="Pfam" id="PF00411">
    <property type="entry name" value="Ribosomal_S11"/>
    <property type="match status" value="1"/>
</dbReference>
<dbReference type="PIRSF" id="PIRSF002131">
    <property type="entry name" value="Ribosomal_S11"/>
    <property type="match status" value="1"/>
</dbReference>
<dbReference type="SUPFAM" id="SSF53137">
    <property type="entry name" value="Translational machinery components"/>
    <property type="match status" value="1"/>
</dbReference>
<dbReference type="PROSITE" id="PS00054">
    <property type="entry name" value="RIBOSOMAL_S11"/>
    <property type="match status" value="1"/>
</dbReference>
<protein>
    <recommendedName>
        <fullName evidence="1">Small ribosomal subunit protein uS11</fullName>
    </recommendedName>
    <alternativeName>
        <fullName evidence="2">30S ribosomal protein S11</fullName>
    </alternativeName>
</protein>
<name>RS11_FRATN</name>
<sequence>MAKSVRSSKKKVKRVVTDAVAHIYSSFNNTIVTITDRQGNALSWATSGGSGFRGSRKSTPFAAQVAAERAADMALEYGVKNVDVLVKGPGSGRDSAVRALNAKNLKVTSITDVTPLPHNGCRPPKKRRV</sequence>
<gene>
    <name evidence="1" type="primary">rpsK</name>
    <name type="ordered locus">FTN_0262</name>
</gene>
<organism>
    <name type="scientific">Francisella tularensis subsp. novicida (strain U112)</name>
    <dbReference type="NCBI Taxonomy" id="401614"/>
    <lineage>
        <taxon>Bacteria</taxon>
        <taxon>Pseudomonadati</taxon>
        <taxon>Pseudomonadota</taxon>
        <taxon>Gammaproteobacteria</taxon>
        <taxon>Thiotrichales</taxon>
        <taxon>Francisellaceae</taxon>
        <taxon>Francisella</taxon>
    </lineage>
</organism>
<keyword id="KW-0687">Ribonucleoprotein</keyword>
<keyword id="KW-0689">Ribosomal protein</keyword>
<keyword id="KW-0694">RNA-binding</keyword>
<keyword id="KW-0699">rRNA-binding</keyword>
<proteinExistence type="inferred from homology"/>